<gene>
    <name evidence="5 6" type="ORF">Smp_074150</name>
</gene>
<proteinExistence type="evidence at protein level"/>
<dbReference type="EMBL" id="HE601629">
    <property type="protein sequence ID" value="CCD80255.1"/>
    <property type="molecule type" value="Genomic_DNA"/>
</dbReference>
<dbReference type="RefSeq" id="XP_018652855.1">
    <property type="nucleotide sequence ID" value="XM_018797855.1"/>
</dbReference>
<dbReference type="PDB" id="4MDU">
    <property type="method" value="X-ray"/>
    <property type="resolution" value="2.20 A"/>
    <property type="chains" value="A/B=1-365"/>
</dbReference>
<dbReference type="PDB" id="4MDV">
    <property type="method" value="X-ray"/>
    <property type="resolution" value="2.50 A"/>
    <property type="chains" value="A/B=1-365"/>
</dbReference>
<dbReference type="PDBsum" id="4MDU"/>
<dbReference type="PDBsum" id="4MDV"/>
<dbReference type="SMR" id="C4QH88"/>
<dbReference type="MINT" id="C4QH88"/>
<dbReference type="STRING" id="6183.C4QH88"/>
<dbReference type="TCDB" id="1.A.31.1.6">
    <property type="family name" value="the annexin (annexin) family"/>
</dbReference>
<dbReference type="EnsemblMetazoa" id="Smp_074150.1">
    <property type="protein sequence ID" value="Smp_074150.1"/>
    <property type="gene ID" value="Smp_074150"/>
</dbReference>
<dbReference type="KEGG" id="smm:Smp_074150.1"/>
<dbReference type="WBParaSite" id="Smp_074150.1">
    <property type="protein sequence ID" value="Smp_074150.1"/>
    <property type="gene ID" value="Smp_074150"/>
</dbReference>
<dbReference type="CTD" id="8346270"/>
<dbReference type="eggNOG" id="KOG0819">
    <property type="taxonomic scope" value="Eukaryota"/>
</dbReference>
<dbReference type="HOGENOM" id="CLU_025300_0_0_1"/>
<dbReference type="InParanoid" id="C4QH88"/>
<dbReference type="OMA" id="HRNIATQ"/>
<dbReference type="OrthoDB" id="37886at2759"/>
<dbReference type="PhylomeDB" id="C4QH88"/>
<dbReference type="EvolutionaryTrace" id="C4QH88"/>
<dbReference type="Proteomes" id="UP000008854">
    <property type="component" value="Unassembled WGS sequence"/>
</dbReference>
<dbReference type="GO" id="GO:0005737">
    <property type="term" value="C:cytoplasm"/>
    <property type="evidence" value="ECO:0007669"/>
    <property type="project" value="TreeGrafter"/>
</dbReference>
<dbReference type="GO" id="GO:0070062">
    <property type="term" value="C:extracellular exosome"/>
    <property type="evidence" value="ECO:0000250"/>
    <property type="project" value="UniProtKB"/>
</dbReference>
<dbReference type="GO" id="GO:0043657">
    <property type="term" value="C:host cell"/>
    <property type="evidence" value="ECO:0000250"/>
    <property type="project" value="UniProtKB"/>
</dbReference>
<dbReference type="GO" id="GO:0016020">
    <property type="term" value="C:membrane"/>
    <property type="evidence" value="ECO:0000314"/>
    <property type="project" value="UniProtKB"/>
</dbReference>
<dbReference type="GO" id="GO:0005634">
    <property type="term" value="C:nucleus"/>
    <property type="evidence" value="ECO:0007669"/>
    <property type="project" value="TreeGrafter"/>
</dbReference>
<dbReference type="GO" id="GO:0005886">
    <property type="term" value="C:plasma membrane"/>
    <property type="evidence" value="ECO:0007669"/>
    <property type="project" value="TreeGrafter"/>
</dbReference>
<dbReference type="GO" id="GO:0012506">
    <property type="term" value="C:vesicle membrane"/>
    <property type="evidence" value="ECO:0007669"/>
    <property type="project" value="TreeGrafter"/>
</dbReference>
<dbReference type="GO" id="GO:0005509">
    <property type="term" value="F:calcium ion binding"/>
    <property type="evidence" value="ECO:0000314"/>
    <property type="project" value="UniProtKB"/>
</dbReference>
<dbReference type="GO" id="GO:0005544">
    <property type="term" value="F:calcium-dependent phospholipid binding"/>
    <property type="evidence" value="ECO:0000314"/>
    <property type="project" value="UniProtKB"/>
</dbReference>
<dbReference type="GO" id="GO:0042802">
    <property type="term" value="F:identical protein binding"/>
    <property type="evidence" value="ECO:0000314"/>
    <property type="project" value="UniProtKB"/>
</dbReference>
<dbReference type="GO" id="GO:0001786">
    <property type="term" value="F:phosphatidylserine binding"/>
    <property type="evidence" value="ECO:0007669"/>
    <property type="project" value="TreeGrafter"/>
</dbReference>
<dbReference type="GO" id="GO:0042803">
    <property type="term" value="F:protein homodimerization activity"/>
    <property type="evidence" value="ECO:0000314"/>
    <property type="project" value="UniProtKB"/>
</dbReference>
<dbReference type="GO" id="GO:0007292">
    <property type="term" value="P:female gamete generation"/>
    <property type="evidence" value="ECO:0000250"/>
    <property type="project" value="UniProtKB"/>
</dbReference>
<dbReference type="GO" id="GO:0061025">
    <property type="term" value="P:membrane fusion"/>
    <property type="evidence" value="ECO:0000305"/>
    <property type="project" value="UniProtKB"/>
</dbReference>
<dbReference type="FunFam" id="1.10.220.10:FF:000001">
    <property type="entry name" value="Annexin"/>
    <property type="match status" value="1"/>
</dbReference>
<dbReference type="FunFam" id="1.10.220.10:FF:000002">
    <property type="entry name" value="Annexin"/>
    <property type="match status" value="1"/>
</dbReference>
<dbReference type="FunFam" id="1.10.220.10:FF:000005">
    <property type="entry name" value="Annexin"/>
    <property type="match status" value="1"/>
</dbReference>
<dbReference type="FunFam" id="1.10.220.10:FF:000038">
    <property type="entry name" value="Annexin"/>
    <property type="match status" value="1"/>
</dbReference>
<dbReference type="Gene3D" id="1.10.220.10">
    <property type="entry name" value="Annexin"/>
    <property type="match status" value="4"/>
</dbReference>
<dbReference type="InterPro" id="IPR001464">
    <property type="entry name" value="Annexin"/>
</dbReference>
<dbReference type="InterPro" id="IPR018502">
    <property type="entry name" value="Annexin_repeat"/>
</dbReference>
<dbReference type="InterPro" id="IPR018252">
    <property type="entry name" value="Annexin_repeat_CS"/>
</dbReference>
<dbReference type="InterPro" id="IPR037104">
    <property type="entry name" value="Annexin_sf"/>
</dbReference>
<dbReference type="PANTHER" id="PTHR10502">
    <property type="entry name" value="ANNEXIN"/>
    <property type="match status" value="1"/>
</dbReference>
<dbReference type="PANTHER" id="PTHR10502:SF102">
    <property type="entry name" value="ANNEXIN B11"/>
    <property type="match status" value="1"/>
</dbReference>
<dbReference type="Pfam" id="PF00191">
    <property type="entry name" value="Annexin"/>
    <property type="match status" value="4"/>
</dbReference>
<dbReference type="PRINTS" id="PR00196">
    <property type="entry name" value="ANNEXIN"/>
</dbReference>
<dbReference type="SMART" id="SM00335">
    <property type="entry name" value="ANX"/>
    <property type="match status" value="4"/>
</dbReference>
<dbReference type="SUPFAM" id="SSF47874">
    <property type="entry name" value="Annexin"/>
    <property type="match status" value="1"/>
</dbReference>
<dbReference type="PROSITE" id="PS00223">
    <property type="entry name" value="ANNEXIN_1"/>
    <property type="match status" value="3"/>
</dbReference>
<dbReference type="PROSITE" id="PS51897">
    <property type="entry name" value="ANNEXIN_2"/>
    <property type="match status" value="4"/>
</dbReference>
<accession>C4QH88</accession>
<reference evidence="7" key="1">
    <citation type="journal article" date="2012" name="PLoS Negl. Trop. Dis.">
        <title>A systematically improved high quality genome and transcriptome of the human blood fluke Schistosoma mansoni.</title>
        <authorList>
            <person name="Protasio A.V."/>
            <person name="Tsai I.J."/>
            <person name="Babbage A."/>
            <person name="Nichol S."/>
            <person name="Hunt M."/>
            <person name="Aslett M.A."/>
            <person name="De Silva N."/>
            <person name="Velarde G.S."/>
            <person name="Anderson T.J."/>
            <person name="Clark R.C."/>
            <person name="Davidson C."/>
            <person name="Dillon G.P."/>
            <person name="Holroyd N.E."/>
            <person name="LoVerde P.T."/>
            <person name="Lloyd C."/>
            <person name="McQuillan J."/>
            <person name="Oliveira G."/>
            <person name="Otto T.D."/>
            <person name="Parker-Manuel S.J."/>
            <person name="Quail M.A."/>
            <person name="Wilson R.A."/>
            <person name="Zerlotini A."/>
            <person name="Dunne D.W."/>
            <person name="Berriman M."/>
        </authorList>
    </citation>
    <scope>NUCLEOTIDE SEQUENCE [LARGE SCALE GENOMIC DNA]</scope>
    <source>
        <strain evidence="7">Puerto Rican</strain>
    </source>
</reference>
<reference evidence="9 10" key="2">
    <citation type="journal article" date="2014" name="FEBS J.">
        <title>Crystal structure and immunological properties of the first annexin from Schistosoma mansoni: insights into the structural integrity of the schistosomal tegument.</title>
        <authorList>
            <person name="Leow C.Y."/>
            <person name="Willis C."/>
            <person name="Osman A."/>
            <person name="Mason L."/>
            <person name="Simon A."/>
            <person name="Smith B.J."/>
            <person name="Gasser R.B."/>
            <person name="Jones M.K."/>
            <person name="Hofmann A."/>
        </authorList>
    </citation>
    <scope>X-RAY CRYSTALLOGRAPHY (2.20 ANGSTROMS) AND IN COMPLEX WITH CALCIUM</scope>
    <scope>FUNCTION</scope>
    <scope>SUBUNIT</scope>
    <scope>SUBCELLULAR LOCATION</scope>
    <scope>DISULFIDE BONDS</scope>
</reference>
<organism evidence="7 8">
    <name type="scientific">Schistosoma mansoni</name>
    <name type="common">Blood fluke</name>
    <dbReference type="NCBI Taxonomy" id="6183"/>
    <lineage>
        <taxon>Eukaryota</taxon>
        <taxon>Metazoa</taxon>
        <taxon>Spiralia</taxon>
        <taxon>Lophotrochozoa</taxon>
        <taxon>Platyhelminthes</taxon>
        <taxon>Trematoda</taxon>
        <taxon>Digenea</taxon>
        <taxon>Strigeidida</taxon>
        <taxon>Schistosomatoidea</taxon>
        <taxon>Schistosomatidae</taxon>
        <taxon>Schistosoma</taxon>
    </lineage>
</organism>
<protein>
    <recommendedName>
        <fullName evidence="5">Annexin B22</fullName>
    </recommendedName>
    <alternativeName>
        <fullName evidence="3">Annexin</fullName>
    </alternativeName>
</protein>
<evidence type="ECO:0000250" key="1">
    <source>
        <dbReference type="UniProtKB" id="C1L7Y4"/>
    </source>
</evidence>
<evidence type="ECO:0000255" key="2">
    <source>
        <dbReference type="PROSITE-ProRule" id="PRU01245"/>
    </source>
</evidence>
<evidence type="ECO:0000255" key="3">
    <source>
        <dbReference type="RuleBase" id="RU003540"/>
    </source>
</evidence>
<evidence type="ECO:0000269" key="4">
    <source>
    </source>
</evidence>
<evidence type="ECO:0000303" key="5">
    <source>
    </source>
</evidence>
<evidence type="ECO:0000312" key="6">
    <source>
        <dbReference type="EMBL" id="CCD80255.1"/>
    </source>
</evidence>
<evidence type="ECO:0000312" key="7">
    <source>
        <dbReference type="Proteomes" id="UP000008854"/>
    </source>
</evidence>
<evidence type="ECO:0000312" key="8">
    <source>
        <dbReference type="WBParaSite" id="Smp_074150.1"/>
    </source>
</evidence>
<evidence type="ECO:0007744" key="9">
    <source>
        <dbReference type="PDB" id="4MDU"/>
    </source>
</evidence>
<evidence type="ECO:0007744" key="10">
    <source>
        <dbReference type="PDB" id="4MDV"/>
    </source>
</evidence>
<evidence type="ECO:0007829" key="11">
    <source>
        <dbReference type="PDB" id="4MDU"/>
    </source>
</evidence>
<name>ANX22_SCHMA</name>
<keyword id="KW-0002">3D-structure</keyword>
<keyword id="KW-0041">Annexin</keyword>
<keyword id="KW-0106">Calcium</keyword>
<keyword id="KW-0111">Calcium/phospholipid-binding</keyword>
<keyword id="KW-1015">Disulfide bond</keyword>
<keyword id="KW-0479">Metal-binding</keyword>
<keyword id="KW-1185">Reference proteome</keyword>
<keyword id="KW-0677">Repeat</keyword>
<keyword id="KW-0964">Secreted</keyword>
<comment type="function">
    <text evidence="1 4">Involved in reproduction of the worm (By similarity). Involved in host-parasite interaction (By similarity). Delivered into the host cell by means of parasite exosomes (By similarity). Binds to acidic phospholipid membranes in a calcium-dependent manner in vitro (PubMed:24428567). Causes aggregation of liposomes in the presence of calcium, but not in its absence (PubMed:24428567). Likely to promote membrane fusion (PubMed:24428567). May provide structural integrity within the tegument (PubMed:24428567).</text>
</comment>
<comment type="subunit">
    <text evidence="4">Homodimer.</text>
</comment>
<comment type="interaction">
    <interactant intactId="EBI-9073174">
        <id>C4QH88</id>
    </interactant>
    <interactant intactId="EBI-9073174">
        <id>C4QH88</id>
        <label>-</label>
    </interactant>
    <organismsDiffer>false</organismsDiffer>
    <experiments>2</experiments>
</comment>
<comment type="subcellular location">
    <subcellularLocation>
        <location evidence="4">Tegument</location>
    </subcellularLocation>
    <subcellularLocation>
        <location evidence="1">Secreted</location>
        <location evidence="1">Extracellular exosome</location>
    </subcellularLocation>
    <subcellularLocation>
        <location evidence="1">Host cell</location>
    </subcellularLocation>
    <text evidence="4">Mainly locates on the cytoplasmic face of the dual membrane of the tegument. Associates with the apical plasma membrane and its derivatives including surface invaginations. Localizes to vesicular structures, such as the elongate bodies, and to muscle layer, within the tegument.</text>
</comment>
<comment type="domain">
    <text evidence="3">A pair of annexin repeats may form one binding site for calcium and phospholipid.</text>
</comment>
<comment type="similarity">
    <text evidence="2 3">Belongs to the annexin family.</text>
</comment>
<feature type="chain" id="PRO_0000461198" description="Annexin B22">
    <location>
        <begin position="1"/>
        <end position="365"/>
    </location>
</feature>
<feature type="repeat" description="Annexin 1" evidence="2">
    <location>
        <begin position="34"/>
        <end position="105"/>
    </location>
</feature>
<feature type="repeat" description="Annexin 2" evidence="2">
    <location>
        <begin position="106"/>
        <end position="185"/>
    </location>
</feature>
<feature type="repeat" description="Annexin 3" evidence="2">
    <location>
        <begin position="211"/>
        <end position="283"/>
    </location>
</feature>
<feature type="repeat" description="Annexin 4" evidence="2">
    <location>
        <begin position="287"/>
        <end position="358"/>
    </location>
</feature>
<feature type="binding site" evidence="4 10">
    <location>
        <position position="47"/>
    </location>
    <ligand>
        <name>Ca(2+)</name>
        <dbReference type="ChEBI" id="CHEBI:29108"/>
        <label>1</label>
    </ligand>
</feature>
<feature type="binding site" evidence="4 10">
    <location>
        <position position="49"/>
    </location>
    <ligand>
        <name>Ca(2+)</name>
        <dbReference type="ChEBI" id="CHEBI:29108"/>
        <label>1</label>
    </ligand>
</feature>
<feature type="binding site" evidence="4 10">
    <location>
        <position position="51"/>
    </location>
    <ligand>
        <name>Ca(2+)</name>
        <dbReference type="ChEBI" id="CHEBI:29108"/>
        <label>1</label>
    </ligand>
</feature>
<feature type="binding site" evidence="4 10">
    <location>
        <position position="52"/>
    </location>
    <ligand>
        <name>Ca(2+)</name>
        <dbReference type="ChEBI" id="CHEBI:29108"/>
        <label>2</label>
    </ligand>
</feature>
<feature type="binding site" evidence="4 10">
    <location>
        <position position="54"/>
    </location>
    <ligand>
        <name>Ca(2+)</name>
        <dbReference type="ChEBI" id="CHEBI:29108"/>
        <label>2</label>
    </ligand>
</feature>
<feature type="binding site" evidence="4 10">
    <location>
        <position position="91"/>
    </location>
    <ligand>
        <name>Ca(2+)</name>
        <dbReference type="ChEBI" id="CHEBI:29108"/>
        <label>1</label>
    </ligand>
</feature>
<feature type="binding site" evidence="4 10">
    <location>
        <position position="119"/>
    </location>
    <ligand>
        <name>Ca(2+)</name>
        <dbReference type="ChEBI" id="CHEBI:29108"/>
        <label>3</label>
    </ligand>
</feature>
<feature type="binding site" evidence="4 10">
    <location>
        <position position="121"/>
    </location>
    <ligand>
        <name>Ca(2+)</name>
        <dbReference type="ChEBI" id="CHEBI:29108"/>
        <label>3</label>
    </ligand>
</feature>
<feature type="binding site" evidence="4 10">
    <location>
        <position position="123"/>
    </location>
    <ligand>
        <name>Ca(2+)</name>
        <dbReference type="ChEBI" id="CHEBI:29108"/>
        <label>3</label>
    </ligand>
</feature>
<feature type="binding site" evidence="4 10">
    <location>
        <position position="126"/>
    </location>
    <ligand>
        <name>Ca(2+)</name>
        <dbReference type="ChEBI" id="CHEBI:29108"/>
        <label>4</label>
    </ligand>
</feature>
<feature type="binding site" evidence="4 10">
    <location>
        <position position="169"/>
    </location>
    <ligand>
        <name>Ca(2+)</name>
        <dbReference type="ChEBI" id="CHEBI:29108"/>
        <label>5</label>
    </ligand>
</feature>
<feature type="binding site" evidence="4 10">
    <location>
        <position position="171"/>
    </location>
    <ligand>
        <name>Ca(2+)</name>
        <dbReference type="ChEBI" id="CHEBI:29108"/>
        <label>3</label>
    </ligand>
</feature>
<feature type="binding site" evidence="4 10">
    <location>
        <position position="172"/>
    </location>
    <ligand>
        <name>Ca(2+)</name>
        <dbReference type="ChEBI" id="CHEBI:29108"/>
        <label>5</label>
    </ligand>
</feature>
<feature type="binding site" evidence="4 10">
    <location>
        <position position="177"/>
    </location>
    <ligand>
        <name>Ca(2+)</name>
        <dbReference type="ChEBI" id="CHEBI:29108"/>
        <label>5</label>
    </ligand>
</feature>
<feature type="binding site" evidence="4 10">
    <location>
        <position position="273"/>
    </location>
    <ligand>
        <name>Ca(2+)</name>
        <dbReference type="ChEBI" id="CHEBI:29108"/>
        <label>4</label>
    </ligand>
</feature>
<feature type="binding site" evidence="4 10">
    <location>
        <position position="300"/>
    </location>
    <ligand>
        <name>Ca(2+)</name>
        <dbReference type="ChEBI" id="CHEBI:29108"/>
        <label>6</label>
    </ligand>
</feature>
<feature type="binding site" evidence="4 10">
    <location>
        <position position="302"/>
    </location>
    <ligand>
        <name>Ca(2+)</name>
        <dbReference type="ChEBI" id="CHEBI:29108"/>
        <label>6</label>
    </ligand>
</feature>
<feature type="binding site" evidence="4 10">
    <location>
        <position position="303"/>
    </location>
    <ligand>
        <name>Ca(2+)</name>
        <dbReference type="ChEBI" id="CHEBI:29108"/>
        <label>6</label>
    </ligand>
</feature>
<feature type="binding site" evidence="4 10">
    <location>
        <position position="304"/>
    </location>
    <ligand>
        <name>Ca(2+)</name>
        <dbReference type="ChEBI" id="CHEBI:29108"/>
        <label>7</label>
    </ligand>
</feature>
<feature type="binding site" evidence="4 10">
    <location>
        <position position="344"/>
    </location>
    <ligand>
        <name>Ca(2+)</name>
        <dbReference type="ChEBI" id="CHEBI:29108"/>
        <label>6</label>
    </ligand>
</feature>
<feature type="binding site" evidence="4 10">
    <location>
        <position position="344"/>
    </location>
    <ligand>
        <name>Ca(2+)</name>
        <dbReference type="ChEBI" id="CHEBI:29108"/>
        <label>7</label>
    </ligand>
</feature>
<feature type="disulfide bond" description="Interchain" evidence="4 9 10">
    <location>
        <position position="173"/>
    </location>
</feature>
<feature type="strand" evidence="11">
    <location>
        <begin position="9"/>
        <end position="11"/>
    </location>
</feature>
<feature type="helix" evidence="11">
    <location>
        <begin position="13"/>
        <end position="15"/>
    </location>
</feature>
<feature type="helix" evidence="11">
    <location>
        <begin position="36"/>
        <end position="46"/>
    </location>
</feature>
<feature type="strand" evidence="11">
    <location>
        <begin position="49"/>
        <end position="51"/>
    </location>
</feature>
<feature type="helix" evidence="11">
    <location>
        <begin position="54"/>
        <end position="61"/>
    </location>
</feature>
<feature type="helix" evidence="11">
    <location>
        <begin position="66"/>
        <end position="80"/>
    </location>
</feature>
<feature type="helix" evidence="11">
    <location>
        <begin position="84"/>
        <end position="91"/>
    </location>
</feature>
<feature type="helix" evidence="11">
    <location>
        <begin position="94"/>
        <end position="103"/>
    </location>
</feature>
<feature type="helix" evidence="11">
    <location>
        <begin position="107"/>
        <end position="120"/>
    </location>
</feature>
<feature type="strand" evidence="11">
    <location>
        <begin position="121"/>
        <end position="123"/>
    </location>
</feature>
<feature type="helix" evidence="11">
    <location>
        <begin position="126"/>
        <end position="133"/>
    </location>
</feature>
<feature type="helix" evidence="11">
    <location>
        <begin position="138"/>
        <end position="154"/>
    </location>
</feature>
<feature type="helix" evidence="11">
    <location>
        <begin position="164"/>
        <end position="167"/>
    </location>
</feature>
<feature type="helix" evidence="11">
    <location>
        <begin position="171"/>
        <end position="173"/>
    </location>
</feature>
<feature type="helix" evidence="11">
    <location>
        <begin position="175"/>
        <end position="184"/>
    </location>
</feature>
<feature type="helix" evidence="11">
    <location>
        <begin position="193"/>
        <end position="197"/>
    </location>
</feature>
<feature type="helix" evidence="11">
    <location>
        <begin position="199"/>
        <end position="202"/>
    </location>
</feature>
<feature type="helix" evidence="11">
    <location>
        <begin position="205"/>
        <end position="207"/>
    </location>
</feature>
<feature type="helix" evidence="11">
    <location>
        <begin position="210"/>
        <end position="222"/>
    </location>
</feature>
<feature type="helix" evidence="11">
    <location>
        <begin position="234"/>
        <end position="239"/>
    </location>
</feature>
<feature type="helix" evidence="11">
    <location>
        <begin position="244"/>
        <end position="258"/>
    </location>
</feature>
<feature type="helix" evidence="11">
    <location>
        <begin position="262"/>
        <end position="269"/>
    </location>
</feature>
<feature type="helix" evidence="11">
    <location>
        <begin position="272"/>
        <end position="286"/>
    </location>
</feature>
<feature type="helix" evidence="11">
    <location>
        <begin position="288"/>
        <end position="299"/>
    </location>
</feature>
<feature type="helix" evidence="11">
    <location>
        <begin position="304"/>
        <end position="306"/>
    </location>
</feature>
<feature type="helix" evidence="11">
    <location>
        <begin position="309"/>
        <end position="317"/>
    </location>
</feature>
<feature type="turn" evidence="11">
    <location>
        <begin position="318"/>
        <end position="321"/>
    </location>
</feature>
<feature type="helix" evidence="11">
    <location>
        <begin position="322"/>
        <end position="333"/>
    </location>
</feature>
<feature type="helix" evidence="11">
    <location>
        <begin position="337"/>
        <end position="344"/>
    </location>
</feature>
<feature type="helix" evidence="11">
    <location>
        <begin position="347"/>
        <end position="356"/>
    </location>
</feature>
<sequence>MANISGFGITRSLIHSFDPHGKHYRPTIKPTTGFSASADAERLHRSMKGPGTNELAIINILARRTNYERQEICQSYKSLYKQDLKDDLKSDTSGDFRKVLCQLIVDTPYMLAKSLYYAMKGLGTNDRVLIEIFTTLWNDEMKAVADAYKQVLKDKGSEESERSLVTDMKKETCGDYEYALLSLVQAERDDIPILQLKAIPDKGVNSIINHELAEADAKDLYASGAGRVGTSERRITRVICNRTPYQLYLTSEIYFKMYGKTLLEHIESETSGDYRKLLVAVLRYAIDRPSLIAEWLHDSMAGLGTKDYALMRLLITRSEIDLQDIMDAYESIYGKSLLNAVKDDTSGDYRRTLCVLMGEIYNQQQ</sequence>